<name>ARNA_ECOUT</name>
<evidence type="ECO:0000255" key="1">
    <source>
        <dbReference type="HAMAP-Rule" id="MF_01166"/>
    </source>
</evidence>
<feature type="chain" id="PRO_0000281722" description="Bifunctional polymyxin resistance protein ArnA">
    <location>
        <begin position="1"/>
        <end position="660"/>
    </location>
</feature>
<feature type="region of interest" description="Formyltransferase ArnAFT">
    <location>
        <begin position="1"/>
        <end position="304"/>
    </location>
</feature>
<feature type="region of interest" description="Dehydrogenase ArnADH">
    <location>
        <begin position="314"/>
        <end position="660"/>
    </location>
</feature>
<feature type="active site" description="Proton donor; for formyltransferase activity" evidence="1">
    <location>
        <position position="104"/>
    </location>
</feature>
<feature type="active site" description="Proton acceptor; for decarboxylase activity" evidence="1">
    <location>
        <position position="434"/>
    </location>
</feature>
<feature type="active site" description="Proton donor; for decarboxylase activity" evidence="1">
    <location>
        <position position="619"/>
    </location>
</feature>
<feature type="binding site" evidence="1">
    <location>
        <begin position="86"/>
        <end position="88"/>
    </location>
    <ligand>
        <name>(6R)-10-formyltetrahydrofolate</name>
        <dbReference type="ChEBI" id="CHEBI:195366"/>
    </ligand>
</feature>
<feature type="binding site" evidence="1">
    <location>
        <position position="114"/>
    </location>
    <ligand>
        <name>(6R)-10-formyltetrahydrofolate</name>
        <dbReference type="ChEBI" id="CHEBI:195366"/>
    </ligand>
</feature>
<feature type="binding site" evidence="1">
    <location>
        <begin position="136"/>
        <end position="140"/>
    </location>
    <ligand>
        <name>(6R)-10-formyltetrahydrofolate</name>
        <dbReference type="ChEBI" id="CHEBI:195366"/>
    </ligand>
</feature>
<feature type="binding site" evidence="1">
    <location>
        <position position="347"/>
    </location>
    <ligand>
        <name>NAD(+)</name>
        <dbReference type="ChEBI" id="CHEBI:57540"/>
    </ligand>
</feature>
<feature type="binding site" evidence="1">
    <location>
        <begin position="368"/>
        <end position="369"/>
    </location>
    <ligand>
        <name>NAD(+)</name>
        <dbReference type="ChEBI" id="CHEBI:57540"/>
    </ligand>
</feature>
<feature type="binding site" evidence="1">
    <location>
        <position position="393"/>
    </location>
    <ligand>
        <name>UDP-alpha-D-glucuronate</name>
        <dbReference type="ChEBI" id="CHEBI:58052"/>
    </ligand>
</feature>
<feature type="binding site" evidence="1">
    <location>
        <position position="398"/>
    </location>
    <ligand>
        <name>UDP-alpha-D-glucuronate</name>
        <dbReference type="ChEBI" id="CHEBI:58052"/>
    </ligand>
</feature>
<feature type="binding site" evidence="1">
    <location>
        <begin position="432"/>
        <end position="433"/>
    </location>
    <ligand>
        <name>UDP-alpha-D-glucuronate</name>
        <dbReference type="ChEBI" id="CHEBI:58052"/>
    </ligand>
</feature>
<feature type="binding site" evidence="1">
    <location>
        <position position="460"/>
    </location>
    <ligand>
        <name>UDP-alpha-D-glucuronate</name>
        <dbReference type="ChEBI" id="CHEBI:58052"/>
    </ligand>
</feature>
<feature type="binding site" evidence="1">
    <location>
        <position position="492"/>
    </location>
    <ligand>
        <name>UDP-alpha-D-glucuronate</name>
        <dbReference type="ChEBI" id="CHEBI:58052"/>
    </ligand>
</feature>
<feature type="binding site" evidence="1">
    <location>
        <begin position="526"/>
        <end position="535"/>
    </location>
    <ligand>
        <name>UDP-alpha-D-glucuronate</name>
        <dbReference type="ChEBI" id="CHEBI:58052"/>
    </ligand>
</feature>
<feature type="binding site" evidence="1">
    <location>
        <position position="613"/>
    </location>
    <ligand>
        <name>UDP-alpha-D-glucuronate</name>
        <dbReference type="ChEBI" id="CHEBI:58052"/>
    </ligand>
</feature>
<feature type="site" description="Transition state stabilizer" evidence="1">
    <location>
        <position position="102"/>
    </location>
</feature>
<feature type="site" description="Raises pKa of active site His" evidence="1">
    <location>
        <position position="140"/>
    </location>
</feature>
<sequence>MKTVVFAYHDMGCLGIEALLAAGYEISAIFTHTDNPGEKAFYGSVARLAAERGIPVYAPDNVNHPLWVERIAQLSPEVIFSFYYRHLICDEILQLAPRGAFNLHGSLLPKYRGRAPLNWVLVNGETETGVTLHRMVKRADAGAIVAQLRVAIAPDDIAITLHHKLCHAARQLLEQTLPAIKHGNILEIAQRENEATCFGRRTPDDSFLEWHKSASVLHNMVRAVADPWPGAFSYVGNQKFTVWSSRVHPHASKAQPGSVISVAPLLIACGDGALEIVTGQAGDGITMQGSQLAQTLGLVQGSRLNSQPACAARRRTRVLILGVNGFIGNHLTERLLREDHYEVYGLDIGSDAISRFLNHPHFHFVEGDISIHSEWIEYHVKKCDVVLPLVAIATPIEYTRNPLRVFELDFEENLRIIRYCVKYRKRIIFPSTSEVYGMCSDKYFDEDHSNLIVGPVNKPRWIYSVSKQLLDRVIWAYGEKEGLQFTLFRPFNWMGPRLDNLNAARIGSSRAITQLILNLVEGSPIKLIDGGKQKRCFTDIRDGIEALYRIIENAGNRCDGEIINIGNPENEASIEELGEMLLASFEKHPLRHYFPPFAGFRVVESSSYYGKGYQDVEHRKPSIRNARRCLNWEPKIDMQETIDETLDFFLRTVDLTDKPS</sequence>
<keyword id="KW-0046">Antibiotic resistance</keyword>
<keyword id="KW-0441">Lipid A biosynthesis</keyword>
<keyword id="KW-0444">Lipid biosynthesis</keyword>
<keyword id="KW-0443">Lipid metabolism</keyword>
<keyword id="KW-0448">Lipopolysaccharide biosynthesis</keyword>
<keyword id="KW-0511">Multifunctional enzyme</keyword>
<keyword id="KW-0520">NAD</keyword>
<keyword id="KW-0560">Oxidoreductase</keyword>
<keyword id="KW-0808">Transferase</keyword>
<comment type="function">
    <text evidence="1">Bifunctional enzyme that catalyzes the oxidative decarboxylation of UDP-glucuronic acid (UDP-GlcUA) to UDP-4-keto-arabinose (UDP-Ara4O) and the addition of a formyl group to UDP-4-amino-4-deoxy-L-arabinose (UDP-L-Ara4N) to form UDP-L-4-formamido-arabinose (UDP-L-Ara4FN). The modified arabinose is attached to lipid A and is required for resistance to polymyxin and cationic antimicrobial peptides.</text>
</comment>
<comment type="catalytic activity">
    <reaction evidence="1">
        <text>UDP-alpha-D-glucuronate + NAD(+) = UDP-beta-L-threo-pentopyranos-4-ulose + CO2 + NADH</text>
        <dbReference type="Rhea" id="RHEA:24702"/>
        <dbReference type="ChEBI" id="CHEBI:16526"/>
        <dbReference type="ChEBI" id="CHEBI:57540"/>
        <dbReference type="ChEBI" id="CHEBI:57945"/>
        <dbReference type="ChEBI" id="CHEBI:58052"/>
        <dbReference type="ChEBI" id="CHEBI:58710"/>
        <dbReference type="EC" id="1.1.1.305"/>
    </reaction>
</comment>
<comment type="catalytic activity">
    <reaction evidence="1">
        <text>UDP-4-amino-4-deoxy-beta-L-arabinose + (6R)-10-formyltetrahydrofolate = UDP-4-deoxy-4-formamido-beta-L-arabinose + (6S)-5,6,7,8-tetrahydrofolate + H(+)</text>
        <dbReference type="Rhea" id="RHEA:24706"/>
        <dbReference type="ChEBI" id="CHEBI:15378"/>
        <dbReference type="ChEBI" id="CHEBI:57453"/>
        <dbReference type="ChEBI" id="CHEBI:58708"/>
        <dbReference type="ChEBI" id="CHEBI:58709"/>
        <dbReference type="ChEBI" id="CHEBI:195366"/>
        <dbReference type="EC" id="2.1.2.13"/>
    </reaction>
</comment>
<comment type="pathway">
    <text evidence="1">Nucleotide-sugar biosynthesis; UDP-4-deoxy-4-formamido-beta-L-arabinose biosynthesis; UDP-4-deoxy-4-formamido-beta-L-arabinose from UDP-alpha-D-glucuronate: step 1/3.</text>
</comment>
<comment type="pathway">
    <text evidence="1">Nucleotide-sugar biosynthesis; UDP-4-deoxy-4-formamido-beta-L-arabinose biosynthesis; UDP-4-deoxy-4-formamido-beta-L-arabinose from UDP-alpha-D-glucuronate: step 3/3.</text>
</comment>
<comment type="pathway">
    <text evidence="1">Bacterial outer membrane biogenesis; lipopolysaccharide biosynthesis.</text>
</comment>
<comment type="subunit">
    <text evidence="1">Homohexamer, formed by a dimer of trimers.</text>
</comment>
<comment type="similarity">
    <text evidence="1">In the N-terminal section; belongs to the Fmt family. UDP-L-Ara4N formyltransferase subfamily.</text>
</comment>
<comment type="similarity">
    <text evidence="1">In the C-terminal section; belongs to the NAD(P)-dependent epimerase/dehydratase family. UDP-glucuronic acid decarboxylase subfamily.</text>
</comment>
<proteinExistence type="inferred from homology"/>
<protein>
    <recommendedName>
        <fullName evidence="1">Bifunctional polymyxin resistance protein ArnA</fullName>
    </recommendedName>
    <domain>
        <recommendedName>
            <fullName evidence="1">UDP-4-amino-4-deoxy-L-arabinose formyltransferase</fullName>
            <ecNumber evidence="1">2.1.2.13</ecNumber>
        </recommendedName>
        <alternativeName>
            <fullName evidence="1">ArnAFT</fullName>
        </alternativeName>
        <alternativeName>
            <fullName evidence="1">UDP-L-Ara4N formyltransferase</fullName>
        </alternativeName>
    </domain>
    <domain>
        <recommendedName>
            <fullName evidence="1">UDP-glucuronic acid oxidase, UDP-4-keto-hexauronic acid decarboxylating</fullName>
            <ecNumber evidence="1">1.1.1.305</ecNumber>
        </recommendedName>
        <alternativeName>
            <fullName evidence="1">ArnADH</fullName>
        </alternativeName>
        <alternativeName>
            <fullName evidence="1">UDP-GlcUA decarboxylase</fullName>
        </alternativeName>
        <alternativeName>
            <fullName evidence="1">UDP-glucuronic acid dehydrogenase</fullName>
        </alternativeName>
    </domain>
</protein>
<accession>Q1R9G0</accession>
<gene>
    <name evidence="1" type="primary">arnA</name>
    <name type="ordered locus">UTI89_C2537</name>
</gene>
<reference key="1">
    <citation type="journal article" date="2006" name="Proc. Natl. Acad. Sci. U.S.A.">
        <title>Identification of genes subject to positive selection in uropathogenic strains of Escherichia coli: a comparative genomics approach.</title>
        <authorList>
            <person name="Chen S.L."/>
            <person name="Hung C.-S."/>
            <person name="Xu J."/>
            <person name="Reigstad C.S."/>
            <person name="Magrini V."/>
            <person name="Sabo A."/>
            <person name="Blasiar D."/>
            <person name="Bieri T."/>
            <person name="Meyer R.R."/>
            <person name="Ozersky P."/>
            <person name="Armstrong J.R."/>
            <person name="Fulton R.S."/>
            <person name="Latreille J.P."/>
            <person name="Spieth J."/>
            <person name="Hooton T.M."/>
            <person name="Mardis E.R."/>
            <person name="Hultgren S.J."/>
            <person name="Gordon J.I."/>
        </authorList>
    </citation>
    <scope>NUCLEOTIDE SEQUENCE [LARGE SCALE GENOMIC DNA]</scope>
    <source>
        <strain>UTI89 / UPEC</strain>
    </source>
</reference>
<dbReference type="EC" id="2.1.2.13" evidence="1"/>
<dbReference type="EC" id="1.1.1.305" evidence="1"/>
<dbReference type="EMBL" id="CP000243">
    <property type="protein sequence ID" value="ABE08004.1"/>
    <property type="molecule type" value="Genomic_DNA"/>
</dbReference>
<dbReference type="RefSeq" id="WP_000860295.1">
    <property type="nucleotide sequence ID" value="NZ_CP064825.1"/>
</dbReference>
<dbReference type="SMR" id="Q1R9G0"/>
<dbReference type="KEGG" id="eci:UTI89_C2537"/>
<dbReference type="HOGENOM" id="CLU_007383_23_2_6"/>
<dbReference type="UniPathway" id="UPA00030"/>
<dbReference type="UniPathway" id="UPA00032">
    <property type="reaction ID" value="UER00492"/>
</dbReference>
<dbReference type="UniPathway" id="UPA00032">
    <property type="reaction ID" value="UER00494"/>
</dbReference>
<dbReference type="Proteomes" id="UP000001952">
    <property type="component" value="Chromosome"/>
</dbReference>
<dbReference type="GO" id="GO:0016020">
    <property type="term" value="C:membrane"/>
    <property type="evidence" value="ECO:0007669"/>
    <property type="project" value="GOC"/>
</dbReference>
<dbReference type="GO" id="GO:0016831">
    <property type="term" value="F:carboxy-lyase activity"/>
    <property type="evidence" value="ECO:0007669"/>
    <property type="project" value="InterPro"/>
</dbReference>
<dbReference type="GO" id="GO:0099619">
    <property type="term" value="F:UDP-4-amino-4-deoxy-L-arabinose formyltransferase activity"/>
    <property type="evidence" value="ECO:0007669"/>
    <property type="project" value="UniProtKB-EC"/>
</dbReference>
<dbReference type="GO" id="GO:0099618">
    <property type="term" value="F:UDP-glucuronate dehydrogenase activity"/>
    <property type="evidence" value="ECO:0007669"/>
    <property type="project" value="UniProtKB-EC"/>
</dbReference>
<dbReference type="GO" id="GO:0009245">
    <property type="term" value="P:lipid A biosynthetic process"/>
    <property type="evidence" value="ECO:0007669"/>
    <property type="project" value="UniProtKB-KW"/>
</dbReference>
<dbReference type="GO" id="GO:0009103">
    <property type="term" value="P:lipopolysaccharide biosynthetic process"/>
    <property type="evidence" value="ECO:0007669"/>
    <property type="project" value="UniProtKB-UniRule"/>
</dbReference>
<dbReference type="GO" id="GO:0046677">
    <property type="term" value="P:response to antibiotic"/>
    <property type="evidence" value="ECO:0007669"/>
    <property type="project" value="UniProtKB-KW"/>
</dbReference>
<dbReference type="CDD" id="cd08702">
    <property type="entry name" value="Arna_FMT_C"/>
    <property type="match status" value="1"/>
</dbReference>
<dbReference type="CDD" id="cd05257">
    <property type="entry name" value="Arna_like_SDR_e"/>
    <property type="match status" value="1"/>
</dbReference>
<dbReference type="CDD" id="cd08644">
    <property type="entry name" value="FMT_core_ArnA_N"/>
    <property type="match status" value="1"/>
</dbReference>
<dbReference type="FunFam" id="3.40.50.12230:FF:000002">
    <property type="entry name" value="Bifunctional polymyxin resistance protein ArnA"/>
    <property type="match status" value="1"/>
</dbReference>
<dbReference type="FunFam" id="3.40.50.720:FF:000197">
    <property type="entry name" value="Bifunctional polymyxin resistance protein ArnA"/>
    <property type="match status" value="1"/>
</dbReference>
<dbReference type="Gene3D" id="3.40.50.12230">
    <property type="match status" value="1"/>
</dbReference>
<dbReference type="Gene3D" id="3.40.50.720">
    <property type="entry name" value="NAD(P)-binding Rossmann-like Domain"/>
    <property type="match status" value="1"/>
</dbReference>
<dbReference type="HAMAP" id="MF_01166">
    <property type="entry name" value="ArnA"/>
    <property type="match status" value="1"/>
</dbReference>
<dbReference type="InterPro" id="IPR045869">
    <property type="entry name" value="Arna-like_SDR_e"/>
</dbReference>
<dbReference type="InterPro" id="IPR021168">
    <property type="entry name" value="Bifun_polymyxin_resist_ArnA"/>
</dbReference>
<dbReference type="InterPro" id="IPR001509">
    <property type="entry name" value="Epimerase_deHydtase"/>
</dbReference>
<dbReference type="InterPro" id="IPR005793">
    <property type="entry name" value="Formyl_trans_C"/>
</dbReference>
<dbReference type="InterPro" id="IPR002376">
    <property type="entry name" value="Formyl_transf_N"/>
</dbReference>
<dbReference type="InterPro" id="IPR036477">
    <property type="entry name" value="Formyl_transf_N_sf"/>
</dbReference>
<dbReference type="InterPro" id="IPR011034">
    <property type="entry name" value="Formyl_transferase-like_C_sf"/>
</dbReference>
<dbReference type="InterPro" id="IPR050177">
    <property type="entry name" value="Lipid_A_modif_metabolic_enz"/>
</dbReference>
<dbReference type="InterPro" id="IPR036291">
    <property type="entry name" value="NAD(P)-bd_dom_sf"/>
</dbReference>
<dbReference type="NCBIfam" id="NF005414">
    <property type="entry name" value="PRK06988.1"/>
    <property type="match status" value="1"/>
</dbReference>
<dbReference type="NCBIfam" id="NF005998">
    <property type="entry name" value="PRK08125.1"/>
    <property type="match status" value="1"/>
</dbReference>
<dbReference type="NCBIfam" id="NF008872">
    <property type="entry name" value="PRK11908.1"/>
    <property type="match status" value="1"/>
</dbReference>
<dbReference type="PANTHER" id="PTHR43245">
    <property type="entry name" value="BIFUNCTIONAL POLYMYXIN RESISTANCE PROTEIN ARNA"/>
    <property type="match status" value="1"/>
</dbReference>
<dbReference type="PANTHER" id="PTHR43245:SF13">
    <property type="entry name" value="UDP-D-APIOSE_UDP-D-XYLOSE SYNTHASE 2"/>
    <property type="match status" value="1"/>
</dbReference>
<dbReference type="Pfam" id="PF01370">
    <property type="entry name" value="Epimerase"/>
    <property type="match status" value="1"/>
</dbReference>
<dbReference type="Pfam" id="PF02911">
    <property type="entry name" value="Formyl_trans_C"/>
    <property type="match status" value="1"/>
</dbReference>
<dbReference type="Pfam" id="PF00551">
    <property type="entry name" value="Formyl_trans_N"/>
    <property type="match status" value="1"/>
</dbReference>
<dbReference type="PIRSF" id="PIRSF036506">
    <property type="entry name" value="Bifun_polymyxin_resist_ArnA"/>
    <property type="match status" value="1"/>
</dbReference>
<dbReference type="SUPFAM" id="SSF50486">
    <property type="entry name" value="FMT C-terminal domain-like"/>
    <property type="match status" value="1"/>
</dbReference>
<dbReference type="SUPFAM" id="SSF53328">
    <property type="entry name" value="Formyltransferase"/>
    <property type="match status" value="1"/>
</dbReference>
<dbReference type="SUPFAM" id="SSF51735">
    <property type="entry name" value="NAD(P)-binding Rossmann-fold domains"/>
    <property type="match status" value="1"/>
</dbReference>
<organism>
    <name type="scientific">Escherichia coli (strain UTI89 / UPEC)</name>
    <dbReference type="NCBI Taxonomy" id="364106"/>
    <lineage>
        <taxon>Bacteria</taxon>
        <taxon>Pseudomonadati</taxon>
        <taxon>Pseudomonadota</taxon>
        <taxon>Gammaproteobacteria</taxon>
        <taxon>Enterobacterales</taxon>
        <taxon>Enterobacteriaceae</taxon>
        <taxon>Escherichia</taxon>
    </lineage>
</organism>